<reference key="1">
    <citation type="journal article" date="2003" name="Proc. Natl. Acad. Sci. U.S.A.">
        <title>Complete genome sequence of Lactobacillus plantarum WCFS1.</title>
        <authorList>
            <person name="Kleerebezem M."/>
            <person name="Boekhorst J."/>
            <person name="van Kranenburg R."/>
            <person name="Molenaar D."/>
            <person name="Kuipers O.P."/>
            <person name="Leer R."/>
            <person name="Tarchini R."/>
            <person name="Peters S.A."/>
            <person name="Sandbrink H.M."/>
            <person name="Fiers M.W.E.J."/>
            <person name="Stiekema W."/>
            <person name="Klein Lankhorst R.M."/>
            <person name="Bron P.A."/>
            <person name="Hoffer S.M."/>
            <person name="Nierop Groot M.N."/>
            <person name="Kerkhoven R."/>
            <person name="De Vries M."/>
            <person name="Ursing B."/>
            <person name="De Vos W.M."/>
            <person name="Siezen R.J."/>
        </authorList>
    </citation>
    <scope>NUCLEOTIDE SEQUENCE [LARGE SCALE GENOMIC DNA]</scope>
    <source>
        <strain>ATCC BAA-793 / NCIMB 8826 / WCFS1</strain>
    </source>
</reference>
<reference key="2">
    <citation type="journal article" date="2012" name="J. Bacteriol.">
        <title>Complete resequencing and reannotation of the Lactobacillus plantarum WCFS1 genome.</title>
        <authorList>
            <person name="Siezen R.J."/>
            <person name="Francke C."/>
            <person name="Renckens B."/>
            <person name="Boekhorst J."/>
            <person name="Wels M."/>
            <person name="Kleerebezem M."/>
            <person name="van Hijum S.A."/>
        </authorList>
    </citation>
    <scope>NUCLEOTIDE SEQUENCE [LARGE SCALE GENOMIC DNA]</scope>
    <scope>GENOME REANNOTATION</scope>
    <source>
        <strain>ATCC BAA-793 / NCIMB 8826 / WCFS1</strain>
    </source>
</reference>
<dbReference type="EC" id="5.3.1.9" evidence="1"/>
<dbReference type="EMBL" id="AL935263">
    <property type="protein sequence ID" value="CCC79670.1"/>
    <property type="molecule type" value="Genomic_DNA"/>
</dbReference>
<dbReference type="RefSeq" id="WP_003642759.1">
    <property type="nucleotide sequence ID" value="NC_004567.2"/>
</dbReference>
<dbReference type="RefSeq" id="YP_004890184.1">
    <property type="nucleotide sequence ID" value="NC_004567.2"/>
</dbReference>
<dbReference type="SMR" id="Q88UI4"/>
<dbReference type="STRING" id="220668.lp_2502"/>
<dbReference type="EnsemblBacteria" id="CCC79670">
    <property type="protein sequence ID" value="CCC79670"/>
    <property type="gene ID" value="lp_2502"/>
</dbReference>
<dbReference type="KEGG" id="lpl:lp_2502"/>
<dbReference type="PATRIC" id="fig|220668.9.peg.2107"/>
<dbReference type="eggNOG" id="COG0166">
    <property type="taxonomic scope" value="Bacteria"/>
</dbReference>
<dbReference type="HOGENOM" id="CLU_037303_0_1_9"/>
<dbReference type="OrthoDB" id="140919at2"/>
<dbReference type="PhylomeDB" id="Q88UI4"/>
<dbReference type="UniPathway" id="UPA00109">
    <property type="reaction ID" value="UER00181"/>
</dbReference>
<dbReference type="UniPathway" id="UPA00138"/>
<dbReference type="Proteomes" id="UP000000432">
    <property type="component" value="Chromosome"/>
</dbReference>
<dbReference type="GO" id="GO:0005829">
    <property type="term" value="C:cytosol"/>
    <property type="evidence" value="ECO:0007669"/>
    <property type="project" value="TreeGrafter"/>
</dbReference>
<dbReference type="GO" id="GO:0097367">
    <property type="term" value="F:carbohydrate derivative binding"/>
    <property type="evidence" value="ECO:0007669"/>
    <property type="project" value="InterPro"/>
</dbReference>
<dbReference type="GO" id="GO:0004347">
    <property type="term" value="F:glucose-6-phosphate isomerase activity"/>
    <property type="evidence" value="ECO:0007669"/>
    <property type="project" value="UniProtKB-UniRule"/>
</dbReference>
<dbReference type="GO" id="GO:0048029">
    <property type="term" value="F:monosaccharide binding"/>
    <property type="evidence" value="ECO:0007669"/>
    <property type="project" value="TreeGrafter"/>
</dbReference>
<dbReference type="GO" id="GO:0006094">
    <property type="term" value="P:gluconeogenesis"/>
    <property type="evidence" value="ECO:0007669"/>
    <property type="project" value="UniProtKB-UniRule"/>
</dbReference>
<dbReference type="GO" id="GO:0051156">
    <property type="term" value="P:glucose 6-phosphate metabolic process"/>
    <property type="evidence" value="ECO:0007669"/>
    <property type="project" value="TreeGrafter"/>
</dbReference>
<dbReference type="GO" id="GO:0006096">
    <property type="term" value="P:glycolytic process"/>
    <property type="evidence" value="ECO:0007669"/>
    <property type="project" value="UniProtKB-UniRule"/>
</dbReference>
<dbReference type="CDD" id="cd05015">
    <property type="entry name" value="SIS_PGI_1"/>
    <property type="match status" value="1"/>
</dbReference>
<dbReference type="CDD" id="cd05016">
    <property type="entry name" value="SIS_PGI_2"/>
    <property type="match status" value="1"/>
</dbReference>
<dbReference type="FunFam" id="3.40.50.10490:FF:000015">
    <property type="entry name" value="Glucose-6-phosphate isomerase"/>
    <property type="match status" value="1"/>
</dbReference>
<dbReference type="FunFam" id="3.40.50.10490:FF:000016">
    <property type="entry name" value="Glucose-6-phosphate isomerase"/>
    <property type="match status" value="1"/>
</dbReference>
<dbReference type="Gene3D" id="3.40.50.10490">
    <property type="entry name" value="Glucose-6-phosphate isomerase like protein, domain 1"/>
    <property type="match status" value="3"/>
</dbReference>
<dbReference type="HAMAP" id="MF_00473">
    <property type="entry name" value="G6P_isomerase"/>
    <property type="match status" value="1"/>
</dbReference>
<dbReference type="InterPro" id="IPR001672">
    <property type="entry name" value="G6P_Isomerase"/>
</dbReference>
<dbReference type="InterPro" id="IPR018189">
    <property type="entry name" value="Phosphoglucose_isomerase_CS"/>
</dbReference>
<dbReference type="InterPro" id="IPR046348">
    <property type="entry name" value="SIS_dom_sf"/>
</dbReference>
<dbReference type="InterPro" id="IPR035476">
    <property type="entry name" value="SIS_PGI_1"/>
</dbReference>
<dbReference type="InterPro" id="IPR035482">
    <property type="entry name" value="SIS_PGI_2"/>
</dbReference>
<dbReference type="NCBIfam" id="NF010697">
    <property type="entry name" value="PRK14097.1"/>
    <property type="match status" value="1"/>
</dbReference>
<dbReference type="PANTHER" id="PTHR11469">
    <property type="entry name" value="GLUCOSE-6-PHOSPHATE ISOMERASE"/>
    <property type="match status" value="1"/>
</dbReference>
<dbReference type="PANTHER" id="PTHR11469:SF1">
    <property type="entry name" value="GLUCOSE-6-PHOSPHATE ISOMERASE"/>
    <property type="match status" value="1"/>
</dbReference>
<dbReference type="Pfam" id="PF00342">
    <property type="entry name" value="PGI"/>
    <property type="match status" value="1"/>
</dbReference>
<dbReference type="PRINTS" id="PR00662">
    <property type="entry name" value="G6PISOMERASE"/>
</dbReference>
<dbReference type="SUPFAM" id="SSF53697">
    <property type="entry name" value="SIS domain"/>
    <property type="match status" value="1"/>
</dbReference>
<dbReference type="PROSITE" id="PS00765">
    <property type="entry name" value="P_GLUCOSE_ISOMERASE_1"/>
    <property type="match status" value="1"/>
</dbReference>
<dbReference type="PROSITE" id="PS00174">
    <property type="entry name" value="P_GLUCOSE_ISOMERASE_2"/>
    <property type="match status" value="1"/>
</dbReference>
<dbReference type="PROSITE" id="PS51463">
    <property type="entry name" value="P_GLUCOSE_ISOMERASE_3"/>
    <property type="match status" value="1"/>
</dbReference>
<proteinExistence type="inferred from homology"/>
<comment type="function">
    <text evidence="1">Catalyzes the reversible isomerization of glucose-6-phosphate to fructose-6-phosphate.</text>
</comment>
<comment type="catalytic activity">
    <reaction evidence="1">
        <text>alpha-D-glucose 6-phosphate = beta-D-fructose 6-phosphate</text>
        <dbReference type="Rhea" id="RHEA:11816"/>
        <dbReference type="ChEBI" id="CHEBI:57634"/>
        <dbReference type="ChEBI" id="CHEBI:58225"/>
        <dbReference type="EC" id="5.3.1.9"/>
    </reaction>
</comment>
<comment type="pathway">
    <text evidence="1">Carbohydrate biosynthesis; gluconeogenesis.</text>
</comment>
<comment type="pathway">
    <text evidence="1">Carbohydrate degradation; glycolysis; D-glyceraldehyde 3-phosphate and glycerone phosphate from D-glucose: step 2/4.</text>
</comment>
<comment type="subcellular location">
    <subcellularLocation>
        <location evidence="1">Cytoplasm</location>
    </subcellularLocation>
</comment>
<comment type="similarity">
    <text evidence="1">Belongs to the GPI family.</text>
</comment>
<organism>
    <name type="scientific">Lactiplantibacillus plantarum (strain ATCC BAA-793 / NCIMB 8826 / WCFS1)</name>
    <name type="common">Lactobacillus plantarum</name>
    <dbReference type="NCBI Taxonomy" id="220668"/>
    <lineage>
        <taxon>Bacteria</taxon>
        <taxon>Bacillati</taxon>
        <taxon>Bacillota</taxon>
        <taxon>Bacilli</taxon>
        <taxon>Lactobacillales</taxon>
        <taxon>Lactobacillaceae</taxon>
        <taxon>Lactiplantibacillus</taxon>
    </lineage>
</organism>
<evidence type="ECO:0000255" key="1">
    <source>
        <dbReference type="HAMAP-Rule" id="MF_00473"/>
    </source>
</evidence>
<sequence>MAHISFDSSNLTKFVHNNELGEMQAMVTAADKELREGTGAGNDFRGWLNLPTDYDKEEFARIKTAAKKIQDDSDVLVVIGIGGSYLGARAAIEFLHETFWSSLSREDRKFPQVVFAGNSISSSYVNDLIHLIGDRDFSVNIISKSGTTTEPSIAFRVFKERLIAKYGEEAAKGRIYATTDRKRGALKQEADAEGYETFVIPDDVGGRFTVLTPVGLLPIAVSGGDIDSLMKGAADAQNEYKDADLSKNEAYQYAAYRNILYRKGYTTEILENYEPNMAMFSEWWKQLMGESEGKDQKGIYPSSANFTTDLHSLGQYIQEGRRNLMETVVKVDNATSDVDIPKETENLDGLKYLEGKTMAQVNTKAFEGVIMAHVDGGVPNMVVNIPSQDAYTLGYTMYFFEAAVAISGYLNGINPFNQPGVEAYKNNMFALLGKPGYEELTKKLTARLSD</sequence>
<name>G6PI_LACPL</name>
<keyword id="KW-0963">Cytoplasm</keyword>
<keyword id="KW-0312">Gluconeogenesis</keyword>
<keyword id="KW-0324">Glycolysis</keyword>
<keyword id="KW-0413">Isomerase</keyword>
<keyword id="KW-1185">Reference proteome</keyword>
<gene>
    <name evidence="1" type="primary">pgi</name>
    <name type="ordered locus">lp_2502</name>
</gene>
<protein>
    <recommendedName>
        <fullName evidence="1">Glucose-6-phosphate isomerase</fullName>
        <shortName evidence="1">GPI</shortName>
        <ecNumber evidence="1">5.3.1.9</ecNumber>
    </recommendedName>
    <alternativeName>
        <fullName evidence="1">Phosphoglucose isomerase</fullName>
        <shortName evidence="1">PGI</shortName>
    </alternativeName>
    <alternativeName>
        <fullName evidence="1">Phosphohexose isomerase</fullName>
        <shortName evidence="1">PHI</shortName>
    </alternativeName>
</protein>
<accession>Q88UI4</accession>
<accession>F9UR31</accession>
<feature type="chain" id="PRO_0000180659" description="Glucose-6-phosphate isomerase">
    <location>
        <begin position="1"/>
        <end position="450"/>
    </location>
</feature>
<feature type="active site" description="Proton donor" evidence="1">
    <location>
        <position position="290"/>
    </location>
</feature>
<feature type="active site" evidence="1">
    <location>
        <position position="311"/>
    </location>
</feature>
<feature type="active site" evidence="1">
    <location>
        <position position="425"/>
    </location>
</feature>